<keyword id="KW-0002">3D-structure</keyword>
<keyword id="KW-1185">Reference proteome</keyword>
<gene>
    <name type="primary">yomS</name>
    <name type="ordered locus">BSU21240</name>
</gene>
<evidence type="ECO:0007829" key="1">
    <source>
        <dbReference type="PDB" id="6I5O"/>
    </source>
</evidence>
<dbReference type="EMBL" id="AL009126">
    <property type="protein sequence ID" value="CAB14042.1"/>
    <property type="molecule type" value="Genomic_DNA"/>
</dbReference>
<dbReference type="RefSeq" id="NP_390007.1">
    <property type="nucleotide sequence ID" value="NC_000964.3"/>
</dbReference>
<dbReference type="RefSeq" id="WP_009967523.1">
    <property type="nucleotide sequence ID" value="NZ_OZ025638.1"/>
</dbReference>
<dbReference type="PDB" id="6I5O">
    <property type="method" value="X-ray"/>
    <property type="resolution" value="1.33 A"/>
    <property type="chains" value="A/B/C/D/E=1-118"/>
</dbReference>
<dbReference type="PDBsum" id="6I5O"/>
<dbReference type="SMR" id="O31965"/>
<dbReference type="FunCoup" id="O31965">
    <property type="interactions" value="61"/>
</dbReference>
<dbReference type="STRING" id="224308.BSU21240"/>
<dbReference type="PaxDb" id="224308-BSU21240"/>
<dbReference type="EnsemblBacteria" id="CAB14042">
    <property type="protein sequence ID" value="CAB14042"/>
    <property type="gene ID" value="BSU_21240"/>
</dbReference>
<dbReference type="GeneID" id="939152"/>
<dbReference type="KEGG" id="bsu:BSU21240"/>
<dbReference type="PATRIC" id="fig|224308.179.peg.2319"/>
<dbReference type="eggNOG" id="ENOG5030EJ0">
    <property type="taxonomic scope" value="Bacteria"/>
</dbReference>
<dbReference type="InParanoid" id="O31965"/>
<dbReference type="OrthoDB" id="2908256at2"/>
<dbReference type="PhylomeDB" id="O31965"/>
<dbReference type="BioCyc" id="BSUB:BSU21240-MONOMER"/>
<dbReference type="Proteomes" id="UP000001570">
    <property type="component" value="Chromosome"/>
</dbReference>
<reference key="1">
    <citation type="journal article" date="1997" name="Nature">
        <title>The complete genome sequence of the Gram-positive bacterium Bacillus subtilis.</title>
        <authorList>
            <person name="Kunst F."/>
            <person name="Ogasawara N."/>
            <person name="Moszer I."/>
            <person name="Albertini A.M."/>
            <person name="Alloni G."/>
            <person name="Azevedo V."/>
            <person name="Bertero M.G."/>
            <person name="Bessieres P."/>
            <person name="Bolotin A."/>
            <person name="Borchert S."/>
            <person name="Borriss R."/>
            <person name="Boursier L."/>
            <person name="Brans A."/>
            <person name="Braun M."/>
            <person name="Brignell S.C."/>
            <person name="Bron S."/>
            <person name="Brouillet S."/>
            <person name="Bruschi C.V."/>
            <person name="Caldwell B."/>
            <person name="Capuano V."/>
            <person name="Carter N.M."/>
            <person name="Choi S.-K."/>
            <person name="Codani J.-J."/>
            <person name="Connerton I.F."/>
            <person name="Cummings N.J."/>
            <person name="Daniel R.A."/>
            <person name="Denizot F."/>
            <person name="Devine K.M."/>
            <person name="Duesterhoeft A."/>
            <person name="Ehrlich S.D."/>
            <person name="Emmerson P.T."/>
            <person name="Entian K.-D."/>
            <person name="Errington J."/>
            <person name="Fabret C."/>
            <person name="Ferrari E."/>
            <person name="Foulger D."/>
            <person name="Fritz C."/>
            <person name="Fujita M."/>
            <person name="Fujita Y."/>
            <person name="Fuma S."/>
            <person name="Galizzi A."/>
            <person name="Galleron N."/>
            <person name="Ghim S.-Y."/>
            <person name="Glaser P."/>
            <person name="Goffeau A."/>
            <person name="Golightly E.J."/>
            <person name="Grandi G."/>
            <person name="Guiseppi G."/>
            <person name="Guy B.J."/>
            <person name="Haga K."/>
            <person name="Haiech J."/>
            <person name="Harwood C.R."/>
            <person name="Henaut A."/>
            <person name="Hilbert H."/>
            <person name="Holsappel S."/>
            <person name="Hosono S."/>
            <person name="Hullo M.-F."/>
            <person name="Itaya M."/>
            <person name="Jones L.-M."/>
            <person name="Joris B."/>
            <person name="Karamata D."/>
            <person name="Kasahara Y."/>
            <person name="Klaerr-Blanchard M."/>
            <person name="Klein C."/>
            <person name="Kobayashi Y."/>
            <person name="Koetter P."/>
            <person name="Koningstein G."/>
            <person name="Krogh S."/>
            <person name="Kumano M."/>
            <person name="Kurita K."/>
            <person name="Lapidus A."/>
            <person name="Lardinois S."/>
            <person name="Lauber J."/>
            <person name="Lazarevic V."/>
            <person name="Lee S.-M."/>
            <person name="Levine A."/>
            <person name="Liu H."/>
            <person name="Masuda S."/>
            <person name="Mauel C."/>
            <person name="Medigue C."/>
            <person name="Medina N."/>
            <person name="Mellado R.P."/>
            <person name="Mizuno M."/>
            <person name="Moestl D."/>
            <person name="Nakai S."/>
            <person name="Noback M."/>
            <person name="Noone D."/>
            <person name="O'Reilly M."/>
            <person name="Ogawa K."/>
            <person name="Ogiwara A."/>
            <person name="Oudega B."/>
            <person name="Park S.-H."/>
            <person name="Parro V."/>
            <person name="Pohl T.M."/>
            <person name="Portetelle D."/>
            <person name="Porwollik S."/>
            <person name="Prescott A.M."/>
            <person name="Presecan E."/>
            <person name="Pujic P."/>
            <person name="Purnelle B."/>
            <person name="Rapoport G."/>
            <person name="Rey M."/>
            <person name="Reynolds S."/>
            <person name="Rieger M."/>
            <person name="Rivolta C."/>
            <person name="Rocha E."/>
            <person name="Roche B."/>
            <person name="Rose M."/>
            <person name="Sadaie Y."/>
            <person name="Sato T."/>
            <person name="Scanlan E."/>
            <person name="Schleich S."/>
            <person name="Schroeter R."/>
            <person name="Scoffone F."/>
            <person name="Sekiguchi J."/>
            <person name="Sekowska A."/>
            <person name="Seror S.J."/>
            <person name="Serror P."/>
            <person name="Shin B.-S."/>
            <person name="Soldo B."/>
            <person name="Sorokin A."/>
            <person name="Tacconi E."/>
            <person name="Takagi T."/>
            <person name="Takahashi H."/>
            <person name="Takemaru K."/>
            <person name="Takeuchi M."/>
            <person name="Tamakoshi A."/>
            <person name="Tanaka T."/>
            <person name="Terpstra P."/>
            <person name="Tognoni A."/>
            <person name="Tosato V."/>
            <person name="Uchiyama S."/>
            <person name="Vandenbol M."/>
            <person name="Vannier F."/>
            <person name="Vassarotti A."/>
            <person name="Viari A."/>
            <person name="Wambutt R."/>
            <person name="Wedler E."/>
            <person name="Wedler H."/>
            <person name="Weitzenegger T."/>
            <person name="Winters P."/>
            <person name="Wipat A."/>
            <person name="Yamamoto H."/>
            <person name="Yamane K."/>
            <person name="Yasumoto K."/>
            <person name="Yata K."/>
            <person name="Yoshida K."/>
            <person name="Yoshikawa H.-F."/>
            <person name="Zumstein E."/>
            <person name="Yoshikawa H."/>
            <person name="Danchin A."/>
        </authorList>
    </citation>
    <scope>NUCLEOTIDE SEQUENCE [LARGE SCALE GENOMIC DNA]</scope>
    <source>
        <strain>168</strain>
    </source>
</reference>
<protein>
    <recommendedName>
        <fullName>SPbeta prophage-derived uncharacterized protein YomS</fullName>
    </recommendedName>
</protein>
<name>YOMS_BACSU</name>
<proteinExistence type="evidence at protein level"/>
<accession>O31965</accession>
<organism>
    <name type="scientific">Bacillus subtilis (strain 168)</name>
    <dbReference type="NCBI Taxonomy" id="224308"/>
    <lineage>
        <taxon>Bacteria</taxon>
        <taxon>Bacillati</taxon>
        <taxon>Bacillota</taxon>
        <taxon>Bacilli</taxon>
        <taxon>Bacillales</taxon>
        <taxon>Bacillaceae</taxon>
        <taxon>Bacillus</taxon>
    </lineage>
</organism>
<sequence length="118" mass="12898">MTETTENVVITIPDKTSFTFHEAATSPSEGEEFVVGHFRELTVKISGSSTSREIKFYAVDENGEKTALSGTNKTDFQLGSSTLNTNEYWDFDIAGLFKVMFEVVSVTGDVTVKGIVVS</sequence>
<feature type="chain" id="PRO_0000360597" description="SPbeta prophage-derived uncharacterized protein YomS">
    <location>
        <begin position="1"/>
        <end position="118"/>
    </location>
</feature>
<feature type="strand" evidence="1">
    <location>
        <begin position="8"/>
        <end position="13"/>
    </location>
</feature>
<feature type="strand" evidence="1">
    <location>
        <begin position="15"/>
        <end position="24"/>
    </location>
</feature>
<feature type="strand" evidence="1">
    <location>
        <begin position="40"/>
        <end position="48"/>
    </location>
</feature>
<feature type="strand" evidence="1">
    <location>
        <begin position="50"/>
        <end position="59"/>
    </location>
</feature>
<feature type="strand" evidence="1">
    <location>
        <begin position="65"/>
        <end position="67"/>
    </location>
</feature>
<feature type="strand" evidence="1">
    <location>
        <begin position="70"/>
        <end position="72"/>
    </location>
</feature>
<feature type="turn" evidence="1">
    <location>
        <begin position="73"/>
        <end position="75"/>
    </location>
</feature>
<feature type="strand" evidence="1">
    <location>
        <begin position="78"/>
        <end position="83"/>
    </location>
</feature>
<feature type="strand" evidence="1">
    <location>
        <begin position="85"/>
        <end position="92"/>
    </location>
</feature>
<feature type="strand" evidence="1">
    <location>
        <begin position="97"/>
        <end position="108"/>
    </location>
</feature>
<feature type="strand" evidence="1">
    <location>
        <begin position="110"/>
        <end position="117"/>
    </location>
</feature>